<reference key="1">
    <citation type="journal article" date="2006" name="Nat. Biotechnol.">
        <title>Complete genome of the mutualistic, N2-fixing grass endophyte Azoarcus sp. strain BH72.</title>
        <authorList>
            <person name="Krause A."/>
            <person name="Ramakumar A."/>
            <person name="Bartels D."/>
            <person name="Battistoni F."/>
            <person name="Bekel T."/>
            <person name="Boch J."/>
            <person name="Boehm M."/>
            <person name="Friedrich F."/>
            <person name="Hurek T."/>
            <person name="Krause L."/>
            <person name="Linke B."/>
            <person name="McHardy A.C."/>
            <person name="Sarkar A."/>
            <person name="Schneiker S."/>
            <person name="Syed A.A."/>
            <person name="Thauer R."/>
            <person name="Vorhoelter F.-J."/>
            <person name="Weidner S."/>
            <person name="Puehler A."/>
            <person name="Reinhold-Hurek B."/>
            <person name="Kaiser O."/>
            <person name="Goesmann A."/>
        </authorList>
    </citation>
    <scope>NUCLEOTIDE SEQUENCE [LARGE SCALE GENOMIC DNA]</scope>
    <source>
        <strain>BH72</strain>
    </source>
</reference>
<keyword id="KW-0963">Cytoplasm</keyword>
<keyword id="KW-1185">Reference proteome</keyword>
<keyword id="KW-0704">Schiff base</keyword>
<keyword id="KW-0784">Thiamine biosynthesis</keyword>
<keyword id="KW-0808">Transferase</keyword>
<evidence type="ECO:0000255" key="1">
    <source>
        <dbReference type="HAMAP-Rule" id="MF_00443"/>
    </source>
</evidence>
<feature type="chain" id="PRO_1000025992" description="Thiazole synthase">
    <location>
        <begin position="1"/>
        <end position="261"/>
    </location>
</feature>
<feature type="active site" description="Schiff-base intermediate with DXP" evidence="1">
    <location>
        <position position="101"/>
    </location>
</feature>
<feature type="binding site" evidence="1">
    <location>
        <position position="162"/>
    </location>
    <ligand>
        <name>1-deoxy-D-xylulose 5-phosphate</name>
        <dbReference type="ChEBI" id="CHEBI:57792"/>
    </ligand>
</feature>
<feature type="binding site" evidence="1">
    <location>
        <begin position="188"/>
        <end position="189"/>
    </location>
    <ligand>
        <name>1-deoxy-D-xylulose 5-phosphate</name>
        <dbReference type="ChEBI" id="CHEBI:57792"/>
    </ligand>
</feature>
<feature type="binding site" evidence="1">
    <location>
        <begin position="210"/>
        <end position="211"/>
    </location>
    <ligand>
        <name>1-deoxy-D-xylulose 5-phosphate</name>
        <dbReference type="ChEBI" id="CHEBI:57792"/>
    </ligand>
</feature>
<dbReference type="EC" id="2.8.1.10" evidence="1"/>
<dbReference type="EMBL" id="AM406670">
    <property type="protein sequence ID" value="CAL96585.1"/>
    <property type="molecule type" value="Genomic_DNA"/>
</dbReference>
<dbReference type="RefSeq" id="WP_011767691.1">
    <property type="nucleotide sequence ID" value="NC_008702.1"/>
</dbReference>
<dbReference type="SMR" id="A1KCM9"/>
<dbReference type="STRING" id="62928.azo3969"/>
<dbReference type="KEGG" id="aoa:dqs_4112"/>
<dbReference type="KEGG" id="azo:azo3969"/>
<dbReference type="eggNOG" id="COG2022">
    <property type="taxonomic scope" value="Bacteria"/>
</dbReference>
<dbReference type="HOGENOM" id="CLU_062233_1_1_4"/>
<dbReference type="OrthoDB" id="9805935at2"/>
<dbReference type="UniPathway" id="UPA00060"/>
<dbReference type="Proteomes" id="UP000002588">
    <property type="component" value="Chromosome"/>
</dbReference>
<dbReference type="GO" id="GO:0005737">
    <property type="term" value="C:cytoplasm"/>
    <property type="evidence" value="ECO:0007669"/>
    <property type="project" value="UniProtKB-SubCell"/>
</dbReference>
<dbReference type="GO" id="GO:1990107">
    <property type="term" value="F:thiazole synthase activity"/>
    <property type="evidence" value="ECO:0007669"/>
    <property type="project" value="UniProtKB-EC"/>
</dbReference>
<dbReference type="GO" id="GO:0009229">
    <property type="term" value="P:thiamine diphosphate biosynthetic process"/>
    <property type="evidence" value="ECO:0007669"/>
    <property type="project" value="UniProtKB-UniRule"/>
</dbReference>
<dbReference type="CDD" id="cd04728">
    <property type="entry name" value="ThiG"/>
    <property type="match status" value="1"/>
</dbReference>
<dbReference type="Gene3D" id="3.20.20.70">
    <property type="entry name" value="Aldolase class I"/>
    <property type="match status" value="1"/>
</dbReference>
<dbReference type="HAMAP" id="MF_00443">
    <property type="entry name" value="ThiG"/>
    <property type="match status" value="1"/>
</dbReference>
<dbReference type="InterPro" id="IPR013785">
    <property type="entry name" value="Aldolase_TIM"/>
</dbReference>
<dbReference type="InterPro" id="IPR033983">
    <property type="entry name" value="Thiazole_synthase_ThiG"/>
</dbReference>
<dbReference type="InterPro" id="IPR008867">
    <property type="entry name" value="ThiG"/>
</dbReference>
<dbReference type="PANTHER" id="PTHR34266">
    <property type="entry name" value="THIAZOLE SYNTHASE"/>
    <property type="match status" value="1"/>
</dbReference>
<dbReference type="PANTHER" id="PTHR34266:SF2">
    <property type="entry name" value="THIAZOLE SYNTHASE"/>
    <property type="match status" value="1"/>
</dbReference>
<dbReference type="Pfam" id="PF05690">
    <property type="entry name" value="ThiG"/>
    <property type="match status" value="1"/>
</dbReference>
<dbReference type="SUPFAM" id="SSF110399">
    <property type="entry name" value="ThiG-like"/>
    <property type="match status" value="1"/>
</dbReference>
<proteinExistence type="inferred from homology"/>
<organism>
    <name type="scientific">Azoarcus sp. (strain BH72)</name>
    <dbReference type="NCBI Taxonomy" id="418699"/>
    <lineage>
        <taxon>Bacteria</taxon>
        <taxon>Pseudomonadati</taxon>
        <taxon>Pseudomonadota</taxon>
        <taxon>Betaproteobacteria</taxon>
        <taxon>Rhodocyclales</taxon>
        <taxon>Zoogloeaceae</taxon>
        <taxon>Azoarcus</taxon>
    </lineage>
</organism>
<accession>A1KCM9</accession>
<comment type="function">
    <text evidence="1">Catalyzes the rearrangement of 1-deoxy-D-xylulose 5-phosphate (DXP) to produce the thiazole phosphate moiety of thiamine. Sulfur is provided by the thiocarboxylate moiety of the carrier protein ThiS. In vitro, sulfur can be provided by H(2)S.</text>
</comment>
<comment type="catalytic activity">
    <reaction evidence="1">
        <text>[ThiS sulfur-carrier protein]-C-terminal-Gly-aminoethanethioate + 2-iminoacetate + 1-deoxy-D-xylulose 5-phosphate = [ThiS sulfur-carrier protein]-C-terminal Gly-Gly + 2-[(2R,5Z)-2-carboxy-4-methylthiazol-5(2H)-ylidene]ethyl phosphate + 2 H2O + H(+)</text>
        <dbReference type="Rhea" id="RHEA:26297"/>
        <dbReference type="Rhea" id="RHEA-COMP:12909"/>
        <dbReference type="Rhea" id="RHEA-COMP:19908"/>
        <dbReference type="ChEBI" id="CHEBI:15377"/>
        <dbReference type="ChEBI" id="CHEBI:15378"/>
        <dbReference type="ChEBI" id="CHEBI:57792"/>
        <dbReference type="ChEBI" id="CHEBI:62899"/>
        <dbReference type="ChEBI" id="CHEBI:77846"/>
        <dbReference type="ChEBI" id="CHEBI:90778"/>
        <dbReference type="ChEBI" id="CHEBI:232372"/>
        <dbReference type="EC" id="2.8.1.10"/>
    </reaction>
</comment>
<comment type="pathway">
    <text evidence="1">Cofactor biosynthesis; thiamine diphosphate biosynthesis.</text>
</comment>
<comment type="subunit">
    <text evidence="1">Homotetramer. Forms heterodimers with either ThiH or ThiS.</text>
</comment>
<comment type="subcellular location">
    <subcellularLocation>
        <location evidence="1">Cytoplasm</location>
    </subcellularLocation>
</comment>
<comment type="similarity">
    <text evidence="1">Belongs to the ThiG family.</text>
</comment>
<name>THIG_AZOSB</name>
<protein>
    <recommendedName>
        <fullName evidence="1">Thiazole synthase</fullName>
        <ecNumber evidence="1">2.8.1.10</ecNumber>
    </recommendedName>
</protein>
<sequence>MNDTLVIAGKHYRSRLLVGTGKYKDFAETRAAIDASGAEIVTVAIRRTNIGQNADEPNLLDALPPDQFTILPNTAGCYTADDAVRTLRLARELLDGHALVKLEVLGDPKSLFPNMPETLKAAETLVKDGFEVMVYCADDPIQAKMLEEIGCVAVMPLASLIGSGMGILNPWNLRLIIDNAKVPVLVDAGVGTASDAAIAMELGCDGVLMNTAIAAAGQPVLMASAMKKAVEAGREAFLAGRMPRKFYSADPSSPTAGLIGS</sequence>
<gene>
    <name evidence="1" type="primary">thiG</name>
    <name type="ordered locus">azo3969</name>
</gene>